<keyword id="KW-0067">ATP-binding</keyword>
<keyword id="KW-0378">Hydrolase</keyword>
<keyword id="KW-0547">Nucleotide-binding</keyword>
<protein>
    <recommendedName>
        <fullName evidence="1">5-oxoprolinase subunit A</fullName>
        <shortName evidence="1">5-OPase subunit A</shortName>
        <ecNumber evidence="1">3.5.2.9</ecNumber>
    </recommendedName>
    <alternativeName>
        <fullName evidence="1">5-oxoprolinase (ATP-hydrolyzing) subunit A</fullName>
    </alternativeName>
</protein>
<name>PXPA_RALPJ</name>
<dbReference type="EC" id="3.5.2.9" evidence="1"/>
<dbReference type="EMBL" id="CP001068">
    <property type="protein sequence ID" value="ACD27506.1"/>
    <property type="molecule type" value="Genomic_DNA"/>
</dbReference>
<dbReference type="SMR" id="B2U8X6"/>
<dbReference type="STRING" id="402626.Rpic_2372"/>
<dbReference type="KEGG" id="rpi:Rpic_2372"/>
<dbReference type="eggNOG" id="COG1540">
    <property type="taxonomic scope" value="Bacteria"/>
</dbReference>
<dbReference type="HOGENOM" id="CLU_069535_0_0_4"/>
<dbReference type="GO" id="GO:0017168">
    <property type="term" value="F:5-oxoprolinase (ATP-hydrolyzing) activity"/>
    <property type="evidence" value="ECO:0007669"/>
    <property type="project" value="UniProtKB-UniRule"/>
</dbReference>
<dbReference type="GO" id="GO:0005524">
    <property type="term" value="F:ATP binding"/>
    <property type="evidence" value="ECO:0007669"/>
    <property type="project" value="UniProtKB-UniRule"/>
</dbReference>
<dbReference type="GO" id="GO:0005975">
    <property type="term" value="P:carbohydrate metabolic process"/>
    <property type="evidence" value="ECO:0007669"/>
    <property type="project" value="InterPro"/>
</dbReference>
<dbReference type="CDD" id="cd10800">
    <property type="entry name" value="LamB_YcsF_YbgL_like"/>
    <property type="match status" value="1"/>
</dbReference>
<dbReference type="Gene3D" id="3.20.20.370">
    <property type="entry name" value="Glycoside hydrolase/deacetylase"/>
    <property type="match status" value="1"/>
</dbReference>
<dbReference type="HAMAP" id="MF_00691">
    <property type="entry name" value="PxpA"/>
    <property type="match status" value="1"/>
</dbReference>
<dbReference type="InterPro" id="IPR011330">
    <property type="entry name" value="Glyco_hydro/deAcase_b/a-brl"/>
</dbReference>
<dbReference type="InterPro" id="IPR005501">
    <property type="entry name" value="LamB/YcsF/PxpA-like"/>
</dbReference>
<dbReference type="NCBIfam" id="NF003814">
    <property type="entry name" value="PRK05406.1-3"/>
    <property type="match status" value="1"/>
</dbReference>
<dbReference type="NCBIfam" id="NF003815">
    <property type="entry name" value="PRK05406.1-4"/>
    <property type="match status" value="1"/>
</dbReference>
<dbReference type="NCBIfam" id="NF003816">
    <property type="entry name" value="PRK05406.1-5"/>
    <property type="match status" value="1"/>
</dbReference>
<dbReference type="PANTHER" id="PTHR30292:SF0">
    <property type="entry name" value="5-OXOPROLINASE SUBUNIT A"/>
    <property type="match status" value="1"/>
</dbReference>
<dbReference type="PANTHER" id="PTHR30292">
    <property type="entry name" value="UNCHARACTERIZED PROTEIN YBGL-RELATED"/>
    <property type="match status" value="1"/>
</dbReference>
<dbReference type="Pfam" id="PF03746">
    <property type="entry name" value="LamB_YcsF"/>
    <property type="match status" value="1"/>
</dbReference>
<dbReference type="SUPFAM" id="SSF88713">
    <property type="entry name" value="Glycoside hydrolase/deacetylase"/>
    <property type="match status" value="1"/>
</dbReference>
<accession>B2U8X6</accession>
<comment type="function">
    <text evidence="1">Catalyzes the cleavage of 5-oxoproline to form L-glutamate coupled to the hydrolysis of ATP to ADP and inorganic phosphate.</text>
</comment>
<comment type="catalytic activity">
    <reaction evidence="1">
        <text>5-oxo-L-proline + ATP + 2 H2O = L-glutamate + ADP + phosphate + H(+)</text>
        <dbReference type="Rhea" id="RHEA:10348"/>
        <dbReference type="ChEBI" id="CHEBI:15377"/>
        <dbReference type="ChEBI" id="CHEBI:15378"/>
        <dbReference type="ChEBI" id="CHEBI:29985"/>
        <dbReference type="ChEBI" id="CHEBI:30616"/>
        <dbReference type="ChEBI" id="CHEBI:43474"/>
        <dbReference type="ChEBI" id="CHEBI:58402"/>
        <dbReference type="ChEBI" id="CHEBI:456216"/>
        <dbReference type="EC" id="3.5.2.9"/>
    </reaction>
</comment>
<comment type="subunit">
    <text evidence="1">Forms a complex composed of PxpA, PxpB and PxpC.</text>
</comment>
<comment type="similarity">
    <text evidence="1">Belongs to the LamB/PxpA family.</text>
</comment>
<sequence>MTAIDLNADLGEGCDTDEALLALVSSANIACGWHAGDVNTMRQTVGWALRQGVSIGAHPSFPDRENFGRTEMHLQPDEIYAGVLFQIGGLSAIVRAQGGKLAHVKAHGALYNQASRDRPLAMAIVHAIRDFDPSLVVFGLAGGELVKAARELGLQAKEEVFADRGYNADGSLVKRGTPGALIDSEDAALDQTLTMVREQRVKAIDGTWVPIRAETVCLHGDGAHALAFARRIRERLGSEGIAVRAGA</sequence>
<organism>
    <name type="scientific">Ralstonia pickettii (strain 12J)</name>
    <dbReference type="NCBI Taxonomy" id="402626"/>
    <lineage>
        <taxon>Bacteria</taxon>
        <taxon>Pseudomonadati</taxon>
        <taxon>Pseudomonadota</taxon>
        <taxon>Betaproteobacteria</taxon>
        <taxon>Burkholderiales</taxon>
        <taxon>Burkholderiaceae</taxon>
        <taxon>Ralstonia</taxon>
    </lineage>
</organism>
<reference key="1">
    <citation type="submission" date="2008-05" db="EMBL/GenBank/DDBJ databases">
        <title>Complete sequence of chromosome 1 of Ralstonia pickettii 12J.</title>
        <authorList>
            <person name="Lucas S."/>
            <person name="Copeland A."/>
            <person name="Lapidus A."/>
            <person name="Glavina del Rio T."/>
            <person name="Dalin E."/>
            <person name="Tice H."/>
            <person name="Bruce D."/>
            <person name="Goodwin L."/>
            <person name="Pitluck S."/>
            <person name="Meincke L."/>
            <person name="Brettin T."/>
            <person name="Detter J.C."/>
            <person name="Han C."/>
            <person name="Kuske C.R."/>
            <person name="Schmutz J."/>
            <person name="Larimer F."/>
            <person name="Land M."/>
            <person name="Hauser L."/>
            <person name="Kyrpides N."/>
            <person name="Mikhailova N."/>
            <person name="Marsh T."/>
            <person name="Richardson P."/>
        </authorList>
    </citation>
    <scope>NUCLEOTIDE SEQUENCE [LARGE SCALE GENOMIC DNA]</scope>
    <source>
        <strain>12J</strain>
    </source>
</reference>
<feature type="chain" id="PRO_1000132066" description="5-oxoprolinase subunit A">
    <location>
        <begin position="1"/>
        <end position="247"/>
    </location>
</feature>
<gene>
    <name evidence="1" type="primary">pxpA</name>
    <name type="ordered locus">Rpic_2372</name>
</gene>
<proteinExistence type="inferred from homology"/>
<evidence type="ECO:0000255" key="1">
    <source>
        <dbReference type="HAMAP-Rule" id="MF_00691"/>
    </source>
</evidence>